<accession>Q63DJ9</accession>
<dbReference type="EC" id="4.2.3.3" evidence="1"/>
<dbReference type="EMBL" id="CP000001">
    <property type="protein sequence ID" value="AAU18834.1"/>
    <property type="molecule type" value="Genomic_DNA"/>
</dbReference>
<dbReference type="RefSeq" id="WP_000684755.1">
    <property type="nucleotide sequence ID" value="NZ_CP009968.1"/>
</dbReference>
<dbReference type="SMR" id="Q63DJ9"/>
<dbReference type="KEGG" id="bcz:BCE33L1416"/>
<dbReference type="PATRIC" id="fig|288681.22.peg.4137"/>
<dbReference type="Proteomes" id="UP000002612">
    <property type="component" value="Chromosome"/>
</dbReference>
<dbReference type="GO" id="GO:0005829">
    <property type="term" value="C:cytosol"/>
    <property type="evidence" value="ECO:0007669"/>
    <property type="project" value="TreeGrafter"/>
</dbReference>
<dbReference type="GO" id="GO:0008929">
    <property type="term" value="F:methylglyoxal synthase activity"/>
    <property type="evidence" value="ECO:0007669"/>
    <property type="project" value="UniProtKB-UniRule"/>
</dbReference>
<dbReference type="GO" id="GO:0019242">
    <property type="term" value="P:methylglyoxal biosynthetic process"/>
    <property type="evidence" value="ECO:0007669"/>
    <property type="project" value="UniProtKB-UniRule"/>
</dbReference>
<dbReference type="CDD" id="cd01422">
    <property type="entry name" value="MGS"/>
    <property type="match status" value="1"/>
</dbReference>
<dbReference type="FunFam" id="3.40.50.1380:FF:000006">
    <property type="entry name" value="Methylglyoxal synthase"/>
    <property type="match status" value="1"/>
</dbReference>
<dbReference type="Gene3D" id="3.40.50.1380">
    <property type="entry name" value="Methylglyoxal synthase-like domain"/>
    <property type="match status" value="1"/>
</dbReference>
<dbReference type="HAMAP" id="MF_00549">
    <property type="entry name" value="Methylglyoxal_synth"/>
    <property type="match status" value="1"/>
</dbReference>
<dbReference type="InterPro" id="IPR004363">
    <property type="entry name" value="Methylgl_synth"/>
</dbReference>
<dbReference type="InterPro" id="IPR018148">
    <property type="entry name" value="Methylglyoxal_synth_AS"/>
</dbReference>
<dbReference type="InterPro" id="IPR011607">
    <property type="entry name" value="MGS-like_dom"/>
</dbReference>
<dbReference type="InterPro" id="IPR036914">
    <property type="entry name" value="MGS-like_dom_sf"/>
</dbReference>
<dbReference type="NCBIfam" id="TIGR00160">
    <property type="entry name" value="MGSA"/>
    <property type="match status" value="1"/>
</dbReference>
<dbReference type="NCBIfam" id="NF003559">
    <property type="entry name" value="PRK05234.1"/>
    <property type="match status" value="1"/>
</dbReference>
<dbReference type="PANTHER" id="PTHR30492">
    <property type="entry name" value="METHYLGLYOXAL SYNTHASE"/>
    <property type="match status" value="1"/>
</dbReference>
<dbReference type="PANTHER" id="PTHR30492:SF0">
    <property type="entry name" value="METHYLGLYOXAL SYNTHASE"/>
    <property type="match status" value="1"/>
</dbReference>
<dbReference type="Pfam" id="PF02142">
    <property type="entry name" value="MGS"/>
    <property type="match status" value="1"/>
</dbReference>
<dbReference type="PIRSF" id="PIRSF006614">
    <property type="entry name" value="Methylglyox_syn"/>
    <property type="match status" value="1"/>
</dbReference>
<dbReference type="SMART" id="SM00851">
    <property type="entry name" value="MGS"/>
    <property type="match status" value="1"/>
</dbReference>
<dbReference type="SUPFAM" id="SSF52335">
    <property type="entry name" value="Methylglyoxal synthase-like"/>
    <property type="match status" value="1"/>
</dbReference>
<dbReference type="PROSITE" id="PS01335">
    <property type="entry name" value="METHYLGLYOXAL_SYNTH"/>
    <property type="match status" value="1"/>
</dbReference>
<dbReference type="PROSITE" id="PS51855">
    <property type="entry name" value="MGS"/>
    <property type="match status" value="1"/>
</dbReference>
<evidence type="ECO:0000255" key="1">
    <source>
        <dbReference type="HAMAP-Rule" id="MF_00549"/>
    </source>
</evidence>
<protein>
    <recommendedName>
        <fullName evidence="1">Methylglyoxal synthase</fullName>
        <shortName evidence="1">MGS</shortName>
        <ecNumber evidence="1">4.2.3.3</ecNumber>
    </recommendedName>
</protein>
<comment type="function">
    <text evidence="1">Catalyzes the formation of methylglyoxal from dihydroxyacetone phosphate.</text>
</comment>
<comment type="catalytic activity">
    <reaction evidence="1">
        <text>dihydroxyacetone phosphate = methylglyoxal + phosphate</text>
        <dbReference type="Rhea" id="RHEA:17937"/>
        <dbReference type="ChEBI" id="CHEBI:17158"/>
        <dbReference type="ChEBI" id="CHEBI:43474"/>
        <dbReference type="ChEBI" id="CHEBI:57642"/>
        <dbReference type="EC" id="4.2.3.3"/>
    </reaction>
</comment>
<comment type="similarity">
    <text evidence="1">Belongs to the methylglyoxal synthase family.</text>
</comment>
<organism>
    <name type="scientific">Bacillus cereus (strain ZK / E33L)</name>
    <dbReference type="NCBI Taxonomy" id="288681"/>
    <lineage>
        <taxon>Bacteria</taxon>
        <taxon>Bacillati</taxon>
        <taxon>Bacillota</taxon>
        <taxon>Bacilli</taxon>
        <taxon>Bacillales</taxon>
        <taxon>Bacillaceae</taxon>
        <taxon>Bacillus</taxon>
        <taxon>Bacillus cereus group</taxon>
    </lineage>
</organism>
<sequence length="131" mass="14686">MKIALIAHDKKKDDMVSFAYAYKPIFEQHELFATGTTGLRIMEATGLVVTRYQSGPLGGDQEIGAMIAKNDLDMVIFFRDPLTAQPHEPDVNALLRLCDVYAIPLATNMASAEMLMHALERGDLDYRKLRK</sequence>
<reference key="1">
    <citation type="journal article" date="2006" name="J. Bacteriol.">
        <title>Pathogenomic sequence analysis of Bacillus cereus and Bacillus thuringiensis isolates closely related to Bacillus anthracis.</title>
        <authorList>
            <person name="Han C.S."/>
            <person name="Xie G."/>
            <person name="Challacombe J.F."/>
            <person name="Altherr M.R."/>
            <person name="Bhotika S.S."/>
            <person name="Bruce D."/>
            <person name="Campbell C.S."/>
            <person name="Campbell M.L."/>
            <person name="Chen J."/>
            <person name="Chertkov O."/>
            <person name="Cleland C."/>
            <person name="Dimitrijevic M."/>
            <person name="Doggett N.A."/>
            <person name="Fawcett J.J."/>
            <person name="Glavina T."/>
            <person name="Goodwin L.A."/>
            <person name="Hill K.K."/>
            <person name="Hitchcock P."/>
            <person name="Jackson P.J."/>
            <person name="Keim P."/>
            <person name="Kewalramani A.R."/>
            <person name="Longmire J."/>
            <person name="Lucas S."/>
            <person name="Malfatti S."/>
            <person name="McMurry K."/>
            <person name="Meincke L.J."/>
            <person name="Misra M."/>
            <person name="Moseman B.L."/>
            <person name="Mundt M."/>
            <person name="Munk A.C."/>
            <person name="Okinaka R.T."/>
            <person name="Parson-Quintana B."/>
            <person name="Reilly L.P."/>
            <person name="Richardson P."/>
            <person name="Robinson D.L."/>
            <person name="Rubin E."/>
            <person name="Saunders E."/>
            <person name="Tapia R."/>
            <person name="Tesmer J.G."/>
            <person name="Thayer N."/>
            <person name="Thompson L.S."/>
            <person name="Tice H."/>
            <person name="Ticknor L.O."/>
            <person name="Wills P.L."/>
            <person name="Brettin T.S."/>
            <person name="Gilna P."/>
        </authorList>
    </citation>
    <scope>NUCLEOTIDE SEQUENCE [LARGE SCALE GENOMIC DNA]</scope>
    <source>
        <strain>ZK / E33L</strain>
    </source>
</reference>
<keyword id="KW-0456">Lyase</keyword>
<name>MGSA_BACCZ</name>
<feature type="chain" id="PRO_0000178609" description="Methylglyoxal synthase">
    <location>
        <begin position="1"/>
        <end position="131"/>
    </location>
</feature>
<feature type="domain" description="MGS-like" evidence="1">
    <location>
        <begin position="1"/>
        <end position="131"/>
    </location>
</feature>
<feature type="active site" description="Proton donor/acceptor" evidence="1">
    <location>
        <position position="60"/>
    </location>
</feature>
<feature type="binding site" evidence="1">
    <location>
        <position position="8"/>
    </location>
    <ligand>
        <name>substrate</name>
    </ligand>
</feature>
<feature type="binding site" evidence="1">
    <location>
        <position position="12"/>
    </location>
    <ligand>
        <name>substrate</name>
    </ligand>
</feature>
<feature type="binding site" evidence="1">
    <location>
        <begin position="34"/>
        <end position="37"/>
    </location>
    <ligand>
        <name>substrate</name>
    </ligand>
</feature>
<feature type="binding site" evidence="1">
    <location>
        <begin position="54"/>
        <end position="55"/>
    </location>
    <ligand>
        <name>substrate</name>
    </ligand>
</feature>
<feature type="binding site" evidence="1">
    <location>
        <position position="87"/>
    </location>
    <ligand>
        <name>substrate</name>
    </ligand>
</feature>
<gene>
    <name evidence="1" type="primary">mgsA</name>
    <name type="ordered locus">BCE33L1416</name>
</gene>
<proteinExistence type="inferred from homology"/>